<organismHost>
    <name type="scientific">Homo sapiens</name>
    <name type="common">Human</name>
    <dbReference type="NCBI Taxonomy" id="9606"/>
</organismHost>
<proteinExistence type="evidence at protein level"/>
<evidence type="ECO:0000255" key="1">
    <source>
        <dbReference type="HAMAP-Rule" id="MF_04029"/>
    </source>
</evidence>
<evidence type="ECO:0000256" key="2">
    <source>
        <dbReference type="SAM" id="MobiDB-lite"/>
    </source>
</evidence>
<evidence type="ECO:0000269" key="3">
    <source>
    </source>
</evidence>
<evidence type="ECO:0000269" key="4">
    <source>
    </source>
</evidence>
<protein>
    <recommendedName>
        <fullName evidence="1">Thymidine kinase</fullName>
        <ecNumber evidence="1">2.7.1.21</ecNumber>
    </recommendedName>
</protein>
<name>KITH_HHV1</name>
<comment type="function">
    <text evidence="1">Catalyzes the transfer of the gamma-phospho group of ATP to thymidine to generate dTMP in the salvage pathway of pyrimidine synthesis. The dTMP serves as a substrate for DNA polymerase during viral DNA replication. Allows the virus to be reactivated and to grow in non-proliferative cells lacking a high concentration of phosphorylated nucleic acid precursors.</text>
</comment>
<comment type="catalytic activity">
    <reaction evidence="1">
        <text>thymidine + ATP = dTMP + ADP + H(+)</text>
        <dbReference type="Rhea" id="RHEA:19129"/>
        <dbReference type="ChEBI" id="CHEBI:15378"/>
        <dbReference type="ChEBI" id="CHEBI:17748"/>
        <dbReference type="ChEBI" id="CHEBI:30616"/>
        <dbReference type="ChEBI" id="CHEBI:63528"/>
        <dbReference type="ChEBI" id="CHEBI:456216"/>
        <dbReference type="EC" id="2.7.1.21"/>
    </reaction>
</comment>
<comment type="subunit">
    <text evidence="1">Homodimer.</text>
</comment>
<comment type="biotechnology">
    <text>Used in molecular biology as a selectable marker to identify transfected eukaryotic cells. Used in cancer suicide gene therapy to selectively kill transformed cells.</text>
</comment>
<comment type="miscellaneous">
    <text>Phosphorylates and thereby activates certain drugs used to treat herpes simplex infections like acyclovir (ACV), valaciclovir, and famciclovir to a toxic form, that leads to successful suppression of the infection, while the uninfected cell does not have this ability because it lacks TK. Mutations in thymidine kinase may induce HHV resistance to antiviral therapies in immunocompromised patients. The most frequently observed resistant strains are unable to express TK and are avirulent in animal models of disease. Resistance may be acquired less frequently by selecting variants which no longer recognize ACV or ACV triphosphate as substrates but which retain normal functions.</text>
</comment>
<comment type="miscellaneous">
    <text>The sequence shown is that of strain TAS.</text>
</comment>
<comment type="similarity">
    <text evidence="1">Belongs to the herpesviridae thymidine kinase family.</text>
</comment>
<keyword id="KW-0067">ATP-binding</keyword>
<keyword id="KW-0237">DNA synthesis</keyword>
<keyword id="KW-0244">Early protein</keyword>
<keyword id="KW-0418">Kinase</keyword>
<keyword id="KW-0547">Nucleotide-binding</keyword>
<keyword id="KW-0808">Transferase</keyword>
<reference key="1">
    <citation type="journal article" date="1980" name="Nucleic Acids Res.">
        <title>The nucleotide sequence and transcript map of the herpes simplex virus thymidine kinase gene.</title>
        <authorList>
            <person name="McKnight S.L."/>
        </authorList>
    </citation>
    <scope>NUCLEOTIDE SEQUENCE [GENOMIC DNA]</scope>
    <source>
        <strain>Isolate McKnight</strain>
    </source>
</reference>
<reference key="2">
    <citation type="journal article" date="2000" name="J. Infect. Dis.">
        <title>Genetic characterization of thymidine kinase from acyclovir-resistant and -susceptible herpes simplex virus type 1 isolated from bone marrow transplant recipients.</title>
        <authorList>
            <person name="Morfin F."/>
            <person name="Souillet G."/>
            <person name="Bilger K."/>
            <person name="Ooka T."/>
            <person name="Aymard M."/>
            <person name="Thouvenot D."/>
        </authorList>
    </citation>
    <scope>NUCLEOTIDE SEQUENCE [GENOMIC DNA]</scope>
    <scope>VARIANTS ACYCLOVIR RESISTANT TRP-51; LYS-83; PRO-105 AND VAL-175</scope>
    <source>
        <strain>Isolate clinical BR/1</strain>
        <strain>Isolate clinical BR/2</strain>
        <strain>Isolate clinical CH/1</strain>
        <strain>Isolate clinical HE/1</strain>
        <strain>Isolate clinical HE/2</strain>
        <strain>Isolate clinical LA/1</strain>
        <strain>Isolate clinical LA/2</strain>
        <strain>Isolate clinical MA/1</strain>
        <strain>Isolate clinical MO/1</strain>
        <strain>Isolate clinical PR/1</strain>
        <strain>Isolate clinical PR/2</strain>
        <strain>Isolate clinical VA/1</strain>
    </source>
</reference>
<reference key="3">
    <citation type="journal article" date="2000" name="J. Clin. Microbiol.">
        <title>Comparison of polymorphism of thymidine kinase gene and restriction fragment length polymorphism of genomic DNA in herpes simplex virus type 1.</title>
        <authorList>
            <person name="Nagamine M."/>
            <person name="Suzutani T."/>
            <person name="Saijo M."/>
            <person name="Hayashi K."/>
            <person name="Azuma M."/>
        </authorList>
    </citation>
    <scope>NUCLEOTIDE SEQUENCE [GENOMIC DNA]</scope>
    <source>
        <strain>Isolate clinical h1</strain>
        <strain>Isolate clinical h10</strain>
        <strain>Isolate clinical h11</strain>
        <strain>Isolate clinical h12</strain>
        <strain>Isolate clinical h13</strain>
        <strain>Isolate clinical h14</strain>
        <strain>Isolate clinical h15</strain>
        <strain>Isolate clinical h16</strain>
        <strain>Isolate clinical h17</strain>
        <strain>Isolate clinical h18</strain>
        <strain>Isolate clinical h19</strain>
        <strain>Isolate clinical h2</strain>
        <strain>Isolate clinical h20</strain>
        <strain>Isolate clinical h21</strain>
        <strain>Isolate clinical h22</strain>
        <strain>Isolate clinical h23</strain>
        <strain>Isolate clinical h24</strain>
        <strain>Isolate clinical h25</strain>
        <strain>Isolate clinical h3</strain>
        <strain>Isolate clinical h4</strain>
        <strain>Isolate clinical h5</strain>
        <strain>Isolate clinical h6</strain>
        <strain>Isolate clinical h7</strain>
        <strain>Isolate clinical h8</strain>
        <strain>Isolate clinical h9</strain>
    </source>
</reference>
<reference key="4">
    <citation type="journal article" date="2002" name="Antiviral Res.">
        <title>Genotypic and phenotypic characterization of the thymidine kinase of ACV-resistant HSV-1 derived from an acyclovir-sensitive herpes simplex virus type 1 strain.</title>
        <authorList>
            <person name="Saijo M."/>
            <person name="Suzutani T."/>
            <person name="De Clercq E."/>
            <person name="Niikura M."/>
            <person name="Maeda A."/>
            <person name="Morikawa S."/>
            <person name="Kurane I."/>
        </authorList>
    </citation>
    <scope>NUCLEOTIDE SEQUENCE [GENOMIC DNA]</scope>
    <scope>VARIANTS ACYCLOVIR RESISTANT ASN-55; ASN-65; SER-84; ARG-173; CYS-200; MET-245; MET-287 AND TYR-336</scope>
    <source>
        <strain>Isolate CL17</strain>
        <strain>Isolate CL18</strain>
        <strain>Isolate CL19</strain>
        <strain>Isolate CL20</strain>
        <strain>Isolate CL21</strain>
        <strain>Isolate CL22</strain>
        <strain>Isolate CL23</strain>
        <strain>Isolate CL24</strain>
        <strain>TAS</strain>
    </source>
</reference>
<feature type="chain" id="PRO_0000175068" description="Thymidine kinase">
    <location>
        <begin position="1"/>
        <end position="376"/>
    </location>
</feature>
<feature type="region of interest" description="Disordered" evidence="2">
    <location>
        <begin position="1"/>
        <end position="39"/>
    </location>
</feature>
<feature type="region of interest" description="Disordered" evidence="2">
    <location>
        <begin position="260"/>
        <end position="280"/>
    </location>
</feature>
<feature type="compositionally biased region" description="Basic residues" evidence="2">
    <location>
        <begin position="19"/>
        <end position="32"/>
    </location>
</feature>
<feature type="active site" description="Proton acceptor" evidence="1">
    <location>
        <position position="83"/>
    </location>
</feature>
<feature type="binding site" evidence="1">
    <location>
        <begin position="56"/>
        <end position="63"/>
    </location>
    <ligand>
        <name>ATP</name>
        <dbReference type="ChEBI" id="CHEBI:30616"/>
    </ligand>
</feature>
<feature type="binding site" evidence="1">
    <location>
        <position position="101"/>
    </location>
    <ligand>
        <name>substrate</name>
    </ligand>
</feature>
<feature type="binding site" evidence="1">
    <location>
        <position position="125"/>
    </location>
    <ligand>
        <name>substrate</name>
    </ligand>
</feature>
<feature type="binding site" evidence="1">
    <location>
        <position position="216"/>
    </location>
    <ligand>
        <name>ATP</name>
        <dbReference type="ChEBI" id="CHEBI:30616"/>
    </ligand>
</feature>
<feature type="binding site" evidence="1">
    <location>
        <position position="222"/>
    </location>
    <ligand>
        <name>substrate</name>
    </ligand>
</feature>
<feature type="sequence variant" description="In strain: Isolate McKnight, Isolate clinical h21, Isolate clinical h22, Isolate clinical h23, Isolate clinical h24, Isolate clinical h25, Isolate clinical LA/1, Isolate clinical LA/2 and Isolate clinical MA/1.">
    <original>C</original>
    <variation>G</variation>
    <location>
        <position position="6"/>
    </location>
</feature>
<feature type="sequence variant" description="In strain: Isolate clinical CH/1.">
    <original>A</original>
    <variation>V</variation>
    <location>
        <position position="17"/>
    </location>
</feature>
<feature type="sequence variant" description="In strain: Isolate clinical h3.">
    <original>S</original>
    <variation>N</variation>
    <location>
        <position position="23"/>
    </location>
</feature>
<feature type="sequence variant" description="In strain: Isolate clinical h17.">
    <original>L</original>
    <variation>V</variation>
    <location>
        <position position="29"/>
    </location>
</feature>
<feature type="sequence variant" description="In strain: Isolate clinical h4.">
    <original>R</original>
    <variation>H</variation>
    <location>
        <position position="41"/>
    </location>
</feature>
<feature type="sequence variant" description="In strain: Isolate McKnight, Isolate clinical h21, Isolate clinical h22, Isolate clinical h23, Isolate clinical h24, Isolate clinical h25, Isolate clinical CH/1.">
    <original>L</original>
    <variation>P</variation>
    <location>
        <position position="42"/>
    </location>
</feature>
<feature type="sequence variant" description="In strain: Isolate clinical HE/2; acyclovir resistant." evidence="3">
    <original>R</original>
    <variation>W</variation>
    <location>
        <position position="51"/>
    </location>
</feature>
<feature type="sequence variant" description="In strain: Isolate CL17; acyclovir resistant." evidence="4">
    <original>D</original>
    <variation>N</variation>
    <location>
        <position position="55"/>
    </location>
</feature>
<feature type="sequence variant" description="In strain: Isolate CL18; acyclovir resistant." evidence="4">
    <original>T</original>
    <variation>N</variation>
    <location>
        <position position="65"/>
    </location>
</feature>
<feature type="sequence variant" description="In strain: Isolate clinical LA/2; acyclovir resistant." evidence="3">
    <original>E</original>
    <variation>K</variation>
    <location>
        <position position="83"/>
    </location>
</feature>
<feature type="sequence variant" description="In strain: Isolate CL19; acyclovir resistant." evidence="4">
    <original>P</original>
    <variation>S</variation>
    <location>
        <position position="84"/>
    </location>
</feature>
<feature type="sequence variant" description="In strain: Isolate clinical VA/1.">
    <original>M</original>
    <variation>I</variation>
    <location>
        <position position="85"/>
    </location>
</feature>
<feature type="sequence variant" description="In strain: Isolate McKnight, Isolate clinical CH/1, Isolate clinical h20, Isolate clinical h21, Isolate clinical h22, Isolate clinical h23, Isolate clinical h24, Isolate clinical h25, Isolate clinical LA/1, Isolate clinical LA/2, Isolate clinical MA/1, Isolate clinical PR/1 and Isolate clinical PR/2.">
    <original>Q</original>
    <variation>R</variation>
    <location>
        <position position="89"/>
    </location>
</feature>
<feature type="sequence variant" description="In strain: Isolate clinical CH/1; acyclovir resistant." evidence="3">
    <original>H</original>
    <variation>P</variation>
    <location>
        <position position="105"/>
    </location>
</feature>
<feature type="sequence variant" description="In strain: Isolate clinical h20.">
    <original>T</original>
    <variation>A</variation>
    <location>
        <position position="158"/>
    </location>
</feature>
<feature type="sequence variant" description="In strain: Isolate clinical h13.">
    <original>T</original>
    <variation>I</variation>
    <location>
        <position position="158"/>
    </location>
</feature>
<feature type="sequence variant" description="In strain: Isolate CL20; acyclovir resistant." evidence="4">
    <original>P</original>
    <variation>R</variation>
    <location>
        <position position="173"/>
    </location>
</feature>
<feature type="sequence variant" description="In strain: Isolate clinical BR/2; acyclovir resistant." evidence="3">
    <original>A</original>
    <variation>V</variation>
    <location>
        <position position="175"/>
    </location>
</feature>
<feature type="sequence variant" description="In strain: Isolate clinical h3.">
    <original>V</original>
    <variation>L</variation>
    <location>
        <position position="191"/>
    </location>
</feature>
<feature type="sequence variant" description="In strain: Isolate clinical LA/1 and Isolate clinical LA/2; acyclovir resistant.">
    <original>A</original>
    <variation>V</variation>
    <location>
        <position position="192"/>
    </location>
</feature>
<feature type="sequence variant" description="In strain: Isolate CL21; acyclovir resistant." evidence="4">
    <original>G</original>
    <variation>C</variation>
    <location>
        <position position="200"/>
    </location>
</feature>
<feature type="sequence variant" description="In strain: Isolate clinical h5.">
    <original>R</original>
    <variation>K</variation>
    <location>
        <position position="212"/>
    </location>
</feature>
<feature type="sequence variant" description="In strain: Isolate clinical BR/1, Isolate clinical BR/2, Isolate clinical CH/1 and Isolate clinical VA/1.">
    <original>G</original>
    <variation>E</variation>
    <location>
        <position position="240"/>
    </location>
</feature>
<feature type="sequence variant" description="In strain: Isolate clinical h5.">
    <original>A</original>
    <variation>V</variation>
    <location>
        <position position="243"/>
    </location>
</feature>
<feature type="sequence variant" description="In strain: Isolate CL22; acyclovir resistant." evidence="4">
    <original>T</original>
    <variation>M</variation>
    <location>
        <position position="245"/>
    </location>
</feature>
<feature type="sequence variant" description="In strain: Isolate clinical h25.">
    <original>G</original>
    <variation>A</variation>
    <location>
        <position position="251"/>
    </location>
</feature>
<feature type="sequence variant" description="In strain: Isolate McKnight, Isolate clinical LA/1, Isolate clinical LA/2, Isolate clinical MA/1, Isolate clinical PR/1 and Isolate clinical PR/2.">
    <original>G</original>
    <variation>C</variation>
    <location>
        <position position="251"/>
    </location>
</feature>
<feature type="sequence variant" description="In strain: Isolate clinical h25.">
    <original>E</original>
    <variation>Q</variation>
    <location>
        <position position="257"/>
    </location>
</feature>
<feature type="sequence variant" description="In strain: Isolate clinical CH/1, Isolate clinical LA/1, Isolate clinical LA/2 and Isolate clinical MA/1.">
    <original>V</original>
    <variation>L</variation>
    <location>
        <position position="267"/>
    </location>
</feature>
<feature type="sequence variant" description="In strain: Isolate clinical CH/1, Isolate clinical LA/1, Isolate clinical LA/2, Isolate clinical MA/1, Isolate clinical PR/1 and Isolate clinical PR/2.">
    <original>P</original>
    <variation>T</variation>
    <location>
        <position position="268"/>
    </location>
</feature>
<feature type="sequence variant" description="In strain: Isolate clinical h12.">
    <original>G</original>
    <variation>V</variation>
    <location>
        <position position="271"/>
    </location>
</feature>
<feature type="sequence variant" description="In strain: Isolate clinical h11, Isolate clinical h12.">
    <original>G</original>
    <variation>D</variation>
    <location>
        <position position="279"/>
    </location>
</feature>
<feature type="sequence variant" description="In strain: Isolate clinical CH/1, Isolate clinical LA/1, Isolate clinical LA/2, Isolate clinical MA/1, Isolate clinical PR/1 and Isolate clinical PR/2.">
    <original>D</original>
    <variation>E</variation>
    <location>
        <position position="286"/>
    </location>
</feature>
<feature type="sequence variant" description="In strain: Isolate CL23; acyclovir resistant." evidence="4">
    <original>T</original>
    <variation>M</variation>
    <location>
        <position position="287"/>
    </location>
</feature>
<feature type="sequence variant" description="In strain: Isolate clinical h15.">
    <original>A</original>
    <variation>V</variation>
    <location>
        <position position="316"/>
    </location>
</feature>
<feature type="sequence variant" description="In strain: Isolate clinical h4.">
    <original>K</original>
    <variation>R</variation>
    <location>
        <position position="317"/>
    </location>
</feature>
<feature type="sequence variant" description="In strain: Isolate McKnight.">
    <original>P</original>
    <variation>S</variation>
    <location>
        <position position="321"/>
    </location>
</feature>
<feature type="sequence variant" description="In strain: Isolate clinical h17.">
    <original>S</original>
    <variation>A</variation>
    <location>
        <position position="332"/>
    </location>
</feature>
<feature type="sequence variant" description="In strain: Isolate CL24; acyclovir resistant." evidence="4">
    <original>C</original>
    <variation>Y</variation>
    <location>
        <position position="336"/>
    </location>
</feature>
<feature type="sequence variant" description="In strain: Isolate clinical h20.">
    <original>V</original>
    <variation>I</variation>
    <location>
        <position position="348"/>
    </location>
</feature>
<feature type="sequence variant" description="In strain: Isolate clinical h23 and Isolate clinical h24.">
    <original>P</original>
    <variation>Q</variation>
    <location>
        <position position="355"/>
    </location>
</feature>
<feature type="sequence variant" description="In strain: Isolate clinical BR/2.">
    <original>L</original>
    <variation>P</variation>
    <location>
        <position position="364"/>
    </location>
</feature>
<feature type="sequence variant" description="In strain: Isolate clinical CH/1.">
    <original>E</original>
    <variation>A</variation>
    <location>
        <position position="374"/>
    </location>
</feature>
<feature type="sequence variant" description="In strain: Isolate clinical MA/1, Isolate clinical PR/1 and Isolate clinical PR/2.">
    <original>N</original>
    <variation>H</variation>
    <location>
        <position position="376"/>
    </location>
</feature>
<sequence length="376" mass="40897">MASYPCHQHASAFDQAARSRGHSNRRTALRPRRQQEATEVRLEQKMPTLLRVYIDGPHGMGKTTTTQLLVALGSRDDIVYVPEPMTYWQVLGASETIANIYTTQHRLDQGEISAGDAAVVMTSAQITMGMPYAVTDAVLAPHIGGEAGSSHAPPPALTLIFDRHPIAALLCYPAARYLMGSMTPQAVLAFVALIPPTLPGTNIVLGALPEDRHIDRLAKRQRPGERLDLAMLAAIRRVYGLLANTVRYLQGGGSWREDWGQLSGTAVPPQGAEPQSNAGPRPHIGDTLFTLFRAPELLAPNGDLYNVFAWALDVLAKRLRPMHVFILDYDQSPAGCRDALLQLTSGMVQTHVTTPGSIPTICDLARTFAREMGEAN</sequence>
<accession>Q9QNF7</accession>
<accession>P03176</accession>
<accession>Q9ENR2</accession>
<accession>Q9ENR3</accession>
<accession>Q9ENR4</accession>
<accession>Q9ENR5</accession>
<accession>Q9ENR6</accession>
<accession>Q9ENR7</accession>
<accession>Q9ENR8</accession>
<accession>Q9ENR9</accession>
<accession>Q9ICF2</accession>
<accession>Q9ICF3</accession>
<accession>Q9ICH1</accession>
<accession>Q9IR31</accession>
<accession>Q9IR32</accession>
<accession>Q9IR33</accession>
<accession>Q9IR34</accession>
<accession>Q9IR35</accession>
<accession>Q9IR36</accession>
<accession>Q9IR37</accession>
<accession>Q9IR38</accession>
<accession>Q9IR39</accession>
<accession>Q9IR40</accession>
<accession>Q9IYZ6</accession>
<accession>Q9IZ00</accession>
<accession>Q9IZ01</accession>
<accession>Q9IZ04</accession>
<accession>Q9IZ05</accession>
<accession>Q9IZ06</accession>
<accession>Q9IZ08</accession>
<accession>Q9IZ09</accession>
<organism>
    <name type="scientific">Human herpesvirus 1</name>
    <name type="common">HHV-1</name>
    <name type="synonym">Human herpes simplex virus 1</name>
    <dbReference type="NCBI Taxonomy" id="10298"/>
    <lineage>
        <taxon>Viruses</taxon>
        <taxon>Duplodnaviria</taxon>
        <taxon>Heunggongvirae</taxon>
        <taxon>Peploviricota</taxon>
        <taxon>Herviviricetes</taxon>
        <taxon>Herpesvirales</taxon>
        <taxon>Orthoherpesviridae</taxon>
        <taxon>Alphaherpesvirinae</taxon>
        <taxon>Simplexvirus</taxon>
        <taxon>Simplexvirus humanalpha1</taxon>
    </lineage>
</organism>
<dbReference type="EC" id="2.7.1.21" evidence="1"/>
<dbReference type="EMBL" id="V00470">
    <property type="protein sequence ID" value="CAA23742.1"/>
    <property type="molecule type" value="Genomic_DNA"/>
</dbReference>
<dbReference type="EMBL" id="AF243477">
    <property type="protein sequence ID" value="AAF72491.1"/>
    <property type="molecule type" value="Genomic_DNA"/>
</dbReference>
<dbReference type="EMBL" id="AF243478">
    <property type="protein sequence ID" value="AAF72492.1"/>
    <property type="molecule type" value="Genomic_DNA"/>
</dbReference>
<dbReference type="EMBL" id="AF243479">
    <property type="protein sequence ID" value="AAF72493.1"/>
    <property type="molecule type" value="Genomic_DNA"/>
</dbReference>
<dbReference type="EMBL" id="AF243481">
    <property type="protein sequence ID" value="AAF72495.1"/>
    <property type="molecule type" value="Genomic_DNA"/>
</dbReference>
<dbReference type="EMBL" id="AF243482">
    <property type="protein sequence ID" value="AAF72496.1"/>
    <property type="molecule type" value="Genomic_DNA"/>
</dbReference>
<dbReference type="EMBL" id="AF243483">
    <property type="protein sequence ID" value="AAF72497.1"/>
    <property type="molecule type" value="Genomic_DNA"/>
</dbReference>
<dbReference type="EMBL" id="AF243486">
    <property type="protein sequence ID" value="AAF72500.1"/>
    <property type="molecule type" value="Genomic_DNA"/>
</dbReference>
<dbReference type="EMBL" id="AF243487">
    <property type="protein sequence ID" value="AAF72501.1"/>
    <property type="molecule type" value="Genomic_DNA"/>
</dbReference>
<dbReference type="EMBL" id="AF243488">
    <property type="protein sequence ID" value="AAF72502.1"/>
    <property type="molecule type" value="Genomic_DNA"/>
</dbReference>
<dbReference type="EMBL" id="AF243492">
    <property type="protein sequence ID" value="AAF72506.1"/>
    <property type="molecule type" value="Genomic_DNA"/>
</dbReference>
<dbReference type="EMBL" id="AF243493">
    <property type="protein sequence ID" value="AAF72507.1"/>
    <property type="molecule type" value="Genomic_DNA"/>
</dbReference>
<dbReference type="EMBL" id="AF243494">
    <property type="protein sequence ID" value="AAF72508.1"/>
    <property type="molecule type" value="Genomic_DNA"/>
</dbReference>
<dbReference type="EMBL" id="AB009260">
    <property type="protein sequence ID" value="BAA83999.1"/>
    <property type="molecule type" value="Genomic_DNA"/>
</dbReference>
<dbReference type="EMBL" id="AB032866">
    <property type="protein sequence ID" value="BAA93054.1"/>
    <property type="molecule type" value="Genomic_DNA"/>
</dbReference>
<dbReference type="EMBL" id="AB032867">
    <property type="protein sequence ID" value="BAA93055.1"/>
    <property type="molecule type" value="Genomic_DNA"/>
</dbReference>
<dbReference type="EMBL" id="AB032868">
    <property type="protein sequence ID" value="BAA93056.1"/>
    <property type="molecule type" value="Genomic_DNA"/>
</dbReference>
<dbReference type="EMBL" id="AB032869">
    <property type="protein sequence ID" value="BAA93057.1"/>
    <property type="molecule type" value="Genomic_DNA"/>
</dbReference>
<dbReference type="EMBL" id="AB032870">
    <property type="protein sequence ID" value="BAA93058.1"/>
    <property type="molecule type" value="Genomic_DNA"/>
</dbReference>
<dbReference type="EMBL" id="AB032871">
    <property type="protein sequence ID" value="BAA93059.1"/>
    <property type="molecule type" value="Genomic_DNA"/>
</dbReference>
<dbReference type="EMBL" id="AB032872">
    <property type="protein sequence ID" value="BAA93060.1"/>
    <property type="molecule type" value="Genomic_DNA"/>
</dbReference>
<dbReference type="EMBL" id="AB032873">
    <property type="protein sequence ID" value="BAA93061.1"/>
    <property type="molecule type" value="Genomic_DNA"/>
</dbReference>
<dbReference type="EMBL" id="AB032874">
    <property type="protein sequence ID" value="BAA93062.1"/>
    <property type="molecule type" value="Genomic_DNA"/>
</dbReference>
<dbReference type="EMBL" id="AB032875">
    <property type="protein sequence ID" value="BAA93063.1"/>
    <property type="molecule type" value="Genomic_DNA"/>
</dbReference>
<dbReference type="EMBL" id="AB032876">
    <property type="protein sequence ID" value="BAA93064.1"/>
    <property type="molecule type" value="Genomic_DNA"/>
</dbReference>
<dbReference type="EMBL" id="AB032877">
    <property type="protein sequence ID" value="BAA93065.1"/>
    <property type="molecule type" value="Genomic_DNA"/>
</dbReference>
<dbReference type="EMBL" id="AB032878">
    <property type="protein sequence ID" value="BAA93066.1"/>
    <property type="molecule type" value="Genomic_DNA"/>
</dbReference>
<dbReference type="EMBL" id="AB032879">
    <property type="protein sequence ID" value="BAA93067.1"/>
    <property type="molecule type" value="Genomic_DNA"/>
</dbReference>
<dbReference type="EMBL" id="AB032880">
    <property type="protein sequence ID" value="BAA93068.1"/>
    <property type="molecule type" value="Genomic_DNA"/>
</dbReference>
<dbReference type="EMBL" id="AB032881">
    <property type="protein sequence ID" value="BAA93069.1"/>
    <property type="molecule type" value="Genomic_DNA"/>
</dbReference>
<dbReference type="EMBL" id="AB032882">
    <property type="protein sequence ID" value="BAA93070.1"/>
    <property type="molecule type" value="Genomic_DNA"/>
</dbReference>
<dbReference type="EMBL" id="AB032883">
    <property type="protein sequence ID" value="BAA93071.1"/>
    <property type="molecule type" value="Genomic_DNA"/>
</dbReference>
<dbReference type="EMBL" id="AB032884">
    <property type="protein sequence ID" value="BAA93072.1"/>
    <property type="molecule type" value="Genomic_DNA"/>
</dbReference>
<dbReference type="EMBL" id="AB032885">
    <property type="protein sequence ID" value="BAA93073.1"/>
    <property type="molecule type" value="Genomic_DNA"/>
</dbReference>
<dbReference type="EMBL" id="AB032886">
    <property type="protein sequence ID" value="BAA93074.1"/>
    <property type="molecule type" value="Genomic_DNA"/>
</dbReference>
<dbReference type="EMBL" id="AB032887">
    <property type="protein sequence ID" value="BAA93075.1"/>
    <property type="molecule type" value="Genomic_DNA"/>
</dbReference>
<dbReference type="EMBL" id="AB032888">
    <property type="protein sequence ID" value="BAA93076.1"/>
    <property type="molecule type" value="Genomic_DNA"/>
</dbReference>
<dbReference type="EMBL" id="AB032889">
    <property type="protein sequence ID" value="BAA93077.1"/>
    <property type="molecule type" value="Genomic_DNA"/>
</dbReference>
<dbReference type="EMBL" id="AB032890">
    <property type="protein sequence ID" value="BAA93078.1"/>
    <property type="molecule type" value="Genomic_DNA"/>
</dbReference>
<dbReference type="EMBL" id="AB047358">
    <property type="protein sequence ID" value="BAB11915.1"/>
    <property type="molecule type" value="Genomic_DNA"/>
</dbReference>
<dbReference type="EMBL" id="AB047371">
    <property type="protein sequence ID" value="BAB11948.1"/>
    <property type="molecule type" value="Genomic_DNA"/>
</dbReference>
<dbReference type="EMBL" id="AB047372">
    <property type="protein sequence ID" value="BAB11949.1"/>
    <property type="molecule type" value="Genomic_DNA"/>
</dbReference>
<dbReference type="EMBL" id="AB047373">
    <property type="protein sequence ID" value="BAB11950.1"/>
    <property type="molecule type" value="Genomic_DNA"/>
</dbReference>
<dbReference type="EMBL" id="AB047374">
    <property type="protein sequence ID" value="BAB11951.1"/>
    <property type="molecule type" value="Genomic_DNA"/>
</dbReference>
<dbReference type="EMBL" id="AB047375">
    <property type="protein sequence ID" value="BAB11952.1"/>
    <property type="molecule type" value="Genomic_DNA"/>
</dbReference>
<dbReference type="EMBL" id="AB047376">
    <property type="protein sequence ID" value="BAB11953.1"/>
    <property type="molecule type" value="Genomic_DNA"/>
</dbReference>
<dbReference type="EMBL" id="AB047377">
    <property type="protein sequence ID" value="BAB11954.1"/>
    <property type="molecule type" value="Genomic_DNA"/>
</dbReference>
<dbReference type="EMBL" id="AB047378">
    <property type="protein sequence ID" value="BAB11955.1"/>
    <property type="molecule type" value="Genomic_DNA"/>
</dbReference>
<dbReference type="SMR" id="Q9QNF7"/>
<dbReference type="IntAct" id="Q9QNF7">
    <property type="interactions" value="3"/>
</dbReference>
<dbReference type="MINT" id="Q9QNF7"/>
<dbReference type="BindingDB" id="Q9QNF7"/>
<dbReference type="ChEMBL" id="CHEMBL1795127"/>
<dbReference type="DrugBank" id="DB02921">
    <property type="generic name" value="(South)-Methanocarba-Thymidine"/>
</dbReference>
<dbReference type="DrugBank" id="DB03804">
    <property type="generic name" value="5-Bromothienyldeoxyuridine"/>
</dbReference>
<dbReference type="DrugBank" id="DB02324">
    <property type="generic name" value="5-Iodo-2'-Deoxyuridine-5'-Monophosphate"/>
</dbReference>
<dbReference type="DrugBank" id="DB02500">
    <property type="generic name" value="6-(Dihydroxy-Isobutyl)-Thymine"/>
</dbReference>
<dbReference type="DrugBank" id="DB04139">
    <property type="generic name" value="6-Hydroxypropylthymine"/>
</dbReference>
<dbReference type="DrugBank" id="DB02495">
    <property type="generic name" value="9-(4-hydroxybutyl)-N2-phenylguanine"/>
</dbReference>
<dbReference type="DrugBank" id="DB00787">
    <property type="generic name" value="Acyclovir"/>
</dbReference>
<dbReference type="DrugBank" id="DB01004">
    <property type="generic name" value="Ganciclovir"/>
</dbReference>
<dbReference type="DrugBank" id="DB00249">
    <property type="generic name" value="Idoxuridine"/>
</dbReference>
<dbReference type="DrugBank" id="DB02765">
    <property type="generic name" value="R-9-(2-hydroxypropyl)adenine"/>
</dbReference>
<dbReference type="DrugBank" id="DB00577">
    <property type="generic name" value="Valaciclovir"/>
</dbReference>
<dbReference type="DrugBank" id="DB00194">
    <property type="generic name" value="Vidarabine"/>
</dbReference>
<dbReference type="DrugCentral" id="Q9QNF7"/>
<dbReference type="BRENDA" id="2.7.1.21">
    <property type="organism ID" value="2647"/>
</dbReference>
<dbReference type="SABIO-RK" id="Q9QNF7"/>
<dbReference type="GO" id="GO:0005524">
    <property type="term" value="F:ATP binding"/>
    <property type="evidence" value="ECO:0007669"/>
    <property type="project" value="UniProtKB-KW"/>
</dbReference>
<dbReference type="GO" id="GO:0004797">
    <property type="term" value="F:thymidine kinase activity"/>
    <property type="evidence" value="ECO:0007669"/>
    <property type="project" value="UniProtKB-EC"/>
</dbReference>
<dbReference type="GO" id="GO:0071897">
    <property type="term" value="P:DNA biosynthetic process"/>
    <property type="evidence" value="ECO:0007669"/>
    <property type="project" value="UniProtKB-KW"/>
</dbReference>
<dbReference type="GO" id="GO:0006230">
    <property type="term" value="P:TMP biosynthetic process"/>
    <property type="evidence" value="ECO:0007669"/>
    <property type="project" value="InterPro"/>
</dbReference>
<dbReference type="Gene3D" id="3.40.50.300">
    <property type="entry name" value="P-loop containing nucleotide triphosphate hydrolases"/>
    <property type="match status" value="1"/>
</dbReference>
<dbReference type="HAMAP" id="MF_04029">
    <property type="entry name" value="HSV_KITH"/>
    <property type="match status" value="1"/>
</dbReference>
<dbReference type="InterPro" id="IPR001889">
    <property type="entry name" value="Herpes_TK"/>
</dbReference>
<dbReference type="InterPro" id="IPR027417">
    <property type="entry name" value="P-loop_NTPase"/>
</dbReference>
<dbReference type="Pfam" id="PF00693">
    <property type="entry name" value="Herpes_TK"/>
    <property type="match status" value="1"/>
</dbReference>
<dbReference type="SUPFAM" id="SSF52540">
    <property type="entry name" value="P-loop containing nucleoside triphosphate hydrolases"/>
    <property type="match status" value="1"/>
</dbReference>
<gene>
    <name evidence="1" type="primary">TK</name>
    <name type="synonym">UL23</name>
</gene>